<reference key="1">
    <citation type="submission" date="2006-12" db="EMBL/GenBank/DDBJ databases">
        <title>Complete sequence of Shewanella sp. W3-18-1.</title>
        <authorList>
            <consortium name="US DOE Joint Genome Institute"/>
            <person name="Copeland A."/>
            <person name="Lucas S."/>
            <person name="Lapidus A."/>
            <person name="Barry K."/>
            <person name="Detter J.C."/>
            <person name="Glavina del Rio T."/>
            <person name="Hammon N."/>
            <person name="Israni S."/>
            <person name="Dalin E."/>
            <person name="Tice H."/>
            <person name="Pitluck S."/>
            <person name="Chain P."/>
            <person name="Malfatti S."/>
            <person name="Shin M."/>
            <person name="Vergez L."/>
            <person name="Schmutz J."/>
            <person name="Larimer F."/>
            <person name="Land M."/>
            <person name="Hauser L."/>
            <person name="Kyrpides N."/>
            <person name="Lykidis A."/>
            <person name="Tiedje J."/>
            <person name="Richardson P."/>
        </authorList>
    </citation>
    <scope>NUCLEOTIDE SEQUENCE [LARGE SCALE GENOMIC DNA]</scope>
    <source>
        <strain>W3-18-1</strain>
    </source>
</reference>
<proteinExistence type="inferred from homology"/>
<accession>A1RJZ5</accession>
<name>RNFD_SHESW</name>
<sequence length="349" mass="37398">MAFKIASSPHVTRNLHTSTVMQRVILCLLPGLVVQCAFFGWGTLVQVLLAIIVALSAEAVVMKLRQRSIKASLSDNSAMLTAILIGVAIPPLAPWWMIVIGTAFAIIIVKHLYGGLGHNLFNPAMAAYVLLLISFPVQMTTWIAPSTVAMHSPSVLDSLQLIFNIGANVNMDQFRLGIDGVAMATPLDTLKTDLSMGLTRTESMTKAIFDGATGVGWFWVNLAYLAGGLVLLKLKAIRWHISTGVLAGLFIASSVGFLLSPDTQGSPLFHLFSGATMLAAFFIATDPVTAATSPRGRIIFGTLIGILVYIIRTQGGYPDAFAFAVLLANLCAPFIDYYVRPRSYGHSAG</sequence>
<organism>
    <name type="scientific">Shewanella sp. (strain W3-18-1)</name>
    <dbReference type="NCBI Taxonomy" id="351745"/>
    <lineage>
        <taxon>Bacteria</taxon>
        <taxon>Pseudomonadati</taxon>
        <taxon>Pseudomonadota</taxon>
        <taxon>Gammaproteobacteria</taxon>
        <taxon>Alteromonadales</taxon>
        <taxon>Shewanellaceae</taxon>
        <taxon>Shewanella</taxon>
    </lineage>
</organism>
<evidence type="ECO:0000255" key="1">
    <source>
        <dbReference type="HAMAP-Rule" id="MF_00462"/>
    </source>
</evidence>
<protein>
    <recommendedName>
        <fullName evidence="1">Ion-translocating oxidoreductase complex subunit D</fullName>
        <ecNumber evidence="1">7.-.-.-</ecNumber>
    </recommendedName>
    <alternativeName>
        <fullName evidence="1">Rnf electron transport complex subunit D</fullName>
    </alternativeName>
</protein>
<gene>
    <name evidence="1" type="primary">rnfD</name>
    <name type="ordered locus">Sputw3181_2162</name>
</gene>
<keyword id="KW-0997">Cell inner membrane</keyword>
<keyword id="KW-1003">Cell membrane</keyword>
<keyword id="KW-0249">Electron transport</keyword>
<keyword id="KW-0285">Flavoprotein</keyword>
<keyword id="KW-0288">FMN</keyword>
<keyword id="KW-0472">Membrane</keyword>
<keyword id="KW-0597">Phosphoprotein</keyword>
<keyword id="KW-1278">Translocase</keyword>
<keyword id="KW-0812">Transmembrane</keyword>
<keyword id="KW-1133">Transmembrane helix</keyword>
<keyword id="KW-0813">Transport</keyword>
<feature type="chain" id="PRO_1000081159" description="Ion-translocating oxidoreductase complex subunit D">
    <location>
        <begin position="1"/>
        <end position="349"/>
    </location>
</feature>
<feature type="transmembrane region" description="Helical" evidence="1">
    <location>
        <begin position="37"/>
        <end position="57"/>
    </location>
</feature>
<feature type="transmembrane region" description="Helical" evidence="1">
    <location>
        <begin position="73"/>
        <end position="90"/>
    </location>
</feature>
<feature type="transmembrane region" description="Helical" evidence="1">
    <location>
        <begin position="124"/>
        <end position="144"/>
    </location>
</feature>
<feature type="transmembrane region" description="Helical" evidence="1">
    <location>
        <begin position="212"/>
        <end position="232"/>
    </location>
</feature>
<feature type="transmembrane region" description="Helical" evidence="1">
    <location>
        <begin position="239"/>
        <end position="259"/>
    </location>
</feature>
<feature type="transmembrane region" description="Helical" evidence="1">
    <location>
        <begin position="265"/>
        <end position="285"/>
    </location>
</feature>
<feature type="transmembrane region" description="Helical" evidence="1">
    <location>
        <begin position="291"/>
        <end position="311"/>
    </location>
</feature>
<feature type="transmembrane region" description="Helical" evidence="1">
    <location>
        <begin position="315"/>
        <end position="335"/>
    </location>
</feature>
<feature type="modified residue" description="FMN phosphoryl threonine" evidence="1">
    <location>
        <position position="185"/>
    </location>
</feature>
<dbReference type="EC" id="7.-.-.-" evidence="1"/>
<dbReference type="EMBL" id="CP000503">
    <property type="protein sequence ID" value="ABM24990.1"/>
    <property type="molecule type" value="Genomic_DNA"/>
</dbReference>
<dbReference type="RefSeq" id="WP_011789458.1">
    <property type="nucleotide sequence ID" value="NC_008750.1"/>
</dbReference>
<dbReference type="SMR" id="A1RJZ5"/>
<dbReference type="KEGG" id="shw:Sputw3181_2162"/>
<dbReference type="HOGENOM" id="CLU_042020_0_0_6"/>
<dbReference type="Proteomes" id="UP000002597">
    <property type="component" value="Chromosome"/>
</dbReference>
<dbReference type="GO" id="GO:0005886">
    <property type="term" value="C:plasma membrane"/>
    <property type="evidence" value="ECO:0007669"/>
    <property type="project" value="UniProtKB-SubCell"/>
</dbReference>
<dbReference type="GO" id="GO:0022900">
    <property type="term" value="P:electron transport chain"/>
    <property type="evidence" value="ECO:0007669"/>
    <property type="project" value="UniProtKB-UniRule"/>
</dbReference>
<dbReference type="GO" id="GO:0055085">
    <property type="term" value="P:transmembrane transport"/>
    <property type="evidence" value="ECO:0007669"/>
    <property type="project" value="InterPro"/>
</dbReference>
<dbReference type="HAMAP" id="MF_00462">
    <property type="entry name" value="RsxD_RnfD"/>
    <property type="match status" value="1"/>
</dbReference>
<dbReference type="InterPro" id="IPR004338">
    <property type="entry name" value="NqrB/RnfD"/>
</dbReference>
<dbReference type="InterPro" id="IPR011303">
    <property type="entry name" value="RnfD_bac"/>
</dbReference>
<dbReference type="NCBIfam" id="NF002011">
    <property type="entry name" value="PRK00816.1"/>
    <property type="match status" value="1"/>
</dbReference>
<dbReference type="NCBIfam" id="TIGR01946">
    <property type="entry name" value="rnfD"/>
    <property type="match status" value="1"/>
</dbReference>
<dbReference type="PANTHER" id="PTHR30578">
    <property type="entry name" value="ELECTRON TRANSPORT COMPLEX PROTEIN RNFD"/>
    <property type="match status" value="1"/>
</dbReference>
<dbReference type="PANTHER" id="PTHR30578:SF0">
    <property type="entry name" value="ION-TRANSLOCATING OXIDOREDUCTASE COMPLEX SUBUNIT D"/>
    <property type="match status" value="1"/>
</dbReference>
<dbReference type="Pfam" id="PF03116">
    <property type="entry name" value="NQR2_RnfD_RnfE"/>
    <property type="match status" value="1"/>
</dbReference>
<comment type="function">
    <text evidence="1">Part of a membrane-bound complex that couples electron transfer with translocation of ions across the membrane.</text>
</comment>
<comment type="cofactor">
    <cofactor evidence="1">
        <name>FMN</name>
        <dbReference type="ChEBI" id="CHEBI:58210"/>
    </cofactor>
</comment>
<comment type="subunit">
    <text evidence="1">The complex is composed of six subunits: RnfA, RnfB, RnfC, RnfD, RnfE and RnfG.</text>
</comment>
<comment type="subcellular location">
    <subcellularLocation>
        <location evidence="1">Cell inner membrane</location>
        <topology evidence="1">Multi-pass membrane protein</topology>
    </subcellularLocation>
</comment>
<comment type="similarity">
    <text evidence="1">Belongs to the NqrB/RnfD family.</text>
</comment>